<feature type="chain" id="PRO_0000128107" description="Uncharacterized protein AF_2164">
    <location>
        <begin position="1"/>
        <end position="132"/>
    </location>
</feature>
<feature type="transmembrane region" description="Helical" evidence="1">
    <location>
        <begin position="15"/>
        <end position="37"/>
    </location>
</feature>
<feature type="transmembrane region" description="Helical" evidence="1">
    <location>
        <begin position="49"/>
        <end position="71"/>
    </location>
</feature>
<feature type="transmembrane region" description="Helical" evidence="1">
    <location>
        <begin position="81"/>
        <end position="103"/>
    </location>
</feature>
<feature type="transmembrane region" description="Helical" evidence="1">
    <location>
        <begin position="110"/>
        <end position="129"/>
    </location>
</feature>
<organism>
    <name type="scientific">Archaeoglobus fulgidus (strain ATCC 49558 / DSM 4304 / JCM 9628 / NBRC 100126 / VC-16)</name>
    <dbReference type="NCBI Taxonomy" id="224325"/>
    <lineage>
        <taxon>Archaea</taxon>
        <taxon>Methanobacteriati</taxon>
        <taxon>Methanobacteriota</taxon>
        <taxon>Archaeoglobi</taxon>
        <taxon>Archaeoglobales</taxon>
        <taxon>Archaeoglobaceae</taxon>
        <taxon>Archaeoglobus</taxon>
    </lineage>
</organism>
<keyword id="KW-1003">Cell membrane</keyword>
<keyword id="KW-0472">Membrane</keyword>
<keyword id="KW-1185">Reference proteome</keyword>
<keyword id="KW-0812">Transmembrane</keyword>
<keyword id="KW-1133">Transmembrane helix</keyword>
<accession>O28118</accession>
<comment type="subcellular location">
    <subcellularLocation>
        <location evidence="2">Cell membrane</location>
        <topology evidence="2">Multi-pass membrane protein</topology>
    </subcellularLocation>
</comment>
<name>Y2164_ARCFU</name>
<dbReference type="EMBL" id="AE000782">
    <property type="protein sequence ID" value="AAB89096.1"/>
    <property type="molecule type" value="Genomic_DNA"/>
</dbReference>
<dbReference type="PIR" id="D69520">
    <property type="entry name" value="D69520"/>
</dbReference>
<dbReference type="RefSeq" id="WP_010879653.1">
    <property type="nucleotide sequence ID" value="NC_000917.1"/>
</dbReference>
<dbReference type="STRING" id="224325.AF_2164"/>
<dbReference type="PaxDb" id="224325-AF_2164"/>
<dbReference type="DNASU" id="1485393"/>
<dbReference type="EnsemblBacteria" id="AAB89096">
    <property type="protein sequence ID" value="AAB89096"/>
    <property type="gene ID" value="AF_2164"/>
</dbReference>
<dbReference type="KEGG" id="afu:AF_2164"/>
<dbReference type="HOGENOM" id="CLU_1912232_0_0_2"/>
<dbReference type="Proteomes" id="UP000002199">
    <property type="component" value="Chromosome"/>
</dbReference>
<dbReference type="GO" id="GO:0005886">
    <property type="term" value="C:plasma membrane"/>
    <property type="evidence" value="ECO:0007669"/>
    <property type="project" value="UniProtKB-SubCell"/>
</dbReference>
<protein>
    <recommendedName>
        <fullName>Uncharacterized protein AF_2164</fullName>
    </recommendedName>
</protein>
<sequence>MFFNFLIPPNSFSSFPEYVAFVVSLSYALNATLLLLYSRIFGVEVKEKAFIPVTLSFVAIDFTSIQGLRLFVGIPAYLGVVILTSLCILEGLALALTSSLALVNASRRHLAATWIAANVASSGLFMAFVGVS</sequence>
<evidence type="ECO:0000255" key="1"/>
<evidence type="ECO:0000305" key="2"/>
<proteinExistence type="predicted"/>
<reference key="1">
    <citation type="journal article" date="1997" name="Nature">
        <title>The complete genome sequence of the hyperthermophilic, sulphate-reducing archaeon Archaeoglobus fulgidus.</title>
        <authorList>
            <person name="Klenk H.-P."/>
            <person name="Clayton R.A."/>
            <person name="Tomb J.-F."/>
            <person name="White O."/>
            <person name="Nelson K.E."/>
            <person name="Ketchum K.A."/>
            <person name="Dodson R.J."/>
            <person name="Gwinn M.L."/>
            <person name="Hickey E.K."/>
            <person name="Peterson J.D."/>
            <person name="Richardson D.L."/>
            <person name="Kerlavage A.R."/>
            <person name="Graham D.E."/>
            <person name="Kyrpides N.C."/>
            <person name="Fleischmann R.D."/>
            <person name="Quackenbush J."/>
            <person name="Lee N.H."/>
            <person name="Sutton G.G."/>
            <person name="Gill S.R."/>
            <person name="Kirkness E.F."/>
            <person name="Dougherty B.A."/>
            <person name="McKenney K."/>
            <person name="Adams M.D."/>
            <person name="Loftus B.J."/>
            <person name="Peterson S.N."/>
            <person name="Reich C.I."/>
            <person name="McNeil L.K."/>
            <person name="Badger J.H."/>
            <person name="Glodek A."/>
            <person name="Zhou L."/>
            <person name="Overbeek R."/>
            <person name="Gocayne J.D."/>
            <person name="Weidman J.F."/>
            <person name="McDonald L.A."/>
            <person name="Utterback T.R."/>
            <person name="Cotton M.D."/>
            <person name="Spriggs T."/>
            <person name="Artiach P."/>
            <person name="Kaine B.P."/>
            <person name="Sykes S.M."/>
            <person name="Sadow P.W."/>
            <person name="D'Andrea K.P."/>
            <person name="Bowman C."/>
            <person name="Fujii C."/>
            <person name="Garland S.A."/>
            <person name="Mason T.M."/>
            <person name="Olsen G.J."/>
            <person name="Fraser C.M."/>
            <person name="Smith H.O."/>
            <person name="Woese C.R."/>
            <person name="Venter J.C."/>
        </authorList>
    </citation>
    <scope>NUCLEOTIDE SEQUENCE [LARGE SCALE GENOMIC DNA]</scope>
    <source>
        <strain>ATCC 49558 / DSM 4304 / JCM 9628 / NBRC 100126 / VC-16</strain>
    </source>
</reference>
<gene>
    <name type="ordered locus">AF_2164</name>
</gene>